<feature type="chain" id="PRO_1000139975" description="Putative metal-dependent hydrolase BCG9842_B2589">
    <location>
        <begin position="1"/>
        <end position="173"/>
    </location>
</feature>
<feature type="binding site" evidence="1">
    <location>
        <position position="65"/>
    </location>
    <ligand>
        <name>Zn(2+)</name>
        <dbReference type="ChEBI" id="CHEBI:29105"/>
    </ligand>
</feature>
<feature type="binding site" evidence="1">
    <location>
        <position position="156"/>
    </location>
    <ligand>
        <name>Zn(2+)</name>
        <dbReference type="ChEBI" id="CHEBI:29105"/>
    </ligand>
</feature>
<feature type="binding site" evidence="1">
    <location>
        <position position="160"/>
    </location>
    <ligand>
        <name>Zn(2+)</name>
        <dbReference type="ChEBI" id="CHEBI:29105"/>
    </ligand>
</feature>
<evidence type="ECO:0000255" key="1">
    <source>
        <dbReference type="HAMAP-Rule" id="MF_01256"/>
    </source>
</evidence>
<keyword id="KW-0963">Cytoplasm</keyword>
<keyword id="KW-0378">Hydrolase</keyword>
<keyword id="KW-0479">Metal-binding</keyword>
<keyword id="KW-0862">Zinc</keyword>
<proteinExistence type="inferred from homology"/>
<dbReference type="EC" id="3.-.-.-" evidence="1"/>
<dbReference type="EMBL" id="CP001186">
    <property type="protein sequence ID" value="ACK93068.1"/>
    <property type="molecule type" value="Genomic_DNA"/>
</dbReference>
<dbReference type="RefSeq" id="WP_000999062.1">
    <property type="nucleotide sequence ID" value="NC_011772.1"/>
</dbReference>
<dbReference type="SMR" id="B7IIM0"/>
<dbReference type="KEGG" id="bcg:BCG9842_B2589"/>
<dbReference type="HOGENOM" id="CLU_105789_1_0_9"/>
<dbReference type="Proteomes" id="UP000006744">
    <property type="component" value="Chromosome"/>
</dbReference>
<dbReference type="GO" id="GO:0005737">
    <property type="term" value="C:cytoplasm"/>
    <property type="evidence" value="ECO:0007669"/>
    <property type="project" value="UniProtKB-SubCell"/>
</dbReference>
<dbReference type="GO" id="GO:0016787">
    <property type="term" value="F:hydrolase activity"/>
    <property type="evidence" value="ECO:0007669"/>
    <property type="project" value="UniProtKB-UniRule"/>
</dbReference>
<dbReference type="GO" id="GO:0008270">
    <property type="term" value="F:zinc ion binding"/>
    <property type="evidence" value="ECO:0007669"/>
    <property type="project" value="UniProtKB-UniRule"/>
</dbReference>
<dbReference type="Gene3D" id="1.20.120.450">
    <property type="entry name" value="dinb family like domain"/>
    <property type="match status" value="1"/>
</dbReference>
<dbReference type="HAMAP" id="MF_01256">
    <property type="entry name" value="YfiT_hydrol"/>
    <property type="match status" value="1"/>
</dbReference>
<dbReference type="InterPro" id="IPR024775">
    <property type="entry name" value="DinB-like"/>
</dbReference>
<dbReference type="InterPro" id="IPR034660">
    <property type="entry name" value="DinB/YfiT-like"/>
</dbReference>
<dbReference type="InterPro" id="IPR023774">
    <property type="entry name" value="Put_metal_dep_hydrolase_YfiT"/>
</dbReference>
<dbReference type="NCBIfam" id="NF009807">
    <property type="entry name" value="PRK13291.1"/>
    <property type="match status" value="1"/>
</dbReference>
<dbReference type="Pfam" id="PF12867">
    <property type="entry name" value="DinB_2"/>
    <property type="match status" value="1"/>
</dbReference>
<dbReference type="SUPFAM" id="SSF109854">
    <property type="entry name" value="DinB/YfiT-like putative metalloenzymes"/>
    <property type="match status" value="1"/>
</dbReference>
<name>Y2589_BACC2</name>
<organism>
    <name type="scientific">Bacillus cereus (strain G9842)</name>
    <dbReference type="NCBI Taxonomy" id="405531"/>
    <lineage>
        <taxon>Bacteria</taxon>
        <taxon>Bacillati</taxon>
        <taxon>Bacillota</taxon>
        <taxon>Bacilli</taxon>
        <taxon>Bacillales</taxon>
        <taxon>Bacillaceae</taxon>
        <taxon>Bacillus</taxon>
        <taxon>Bacillus cereus group</taxon>
    </lineage>
</organism>
<sequence length="173" mass="20450">MNDLRYPIGQFTYKRPITEEMIDTWIQEIEDLPHELTKAIKDLDQKQLDTPYRVGGWTVRQVVHHVVDSHMNSYIRFKLALTEKNPTIKPYKEEKWAELPDSKLPVDVSLVMLDSLHKRWVNLLYSLEIEDLEKTFNHPETGETKLAVAIGLYAWHGRHHTAHITSLRKRLNW</sequence>
<reference key="1">
    <citation type="submission" date="2008-10" db="EMBL/GenBank/DDBJ databases">
        <title>Genome sequence of Bacillus cereus G9842.</title>
        <authorList>
            <person name="Dodson R.J."/>
            <person name="Durkin A.S."/>
            <person name="Rosovitz M.J."/>
            <person name="Rasko D.A."/>
            <person name="Hoffmaster A."/>
            <person name="Ravel J."/>
            <person name="Sutton G."/>
        </authorList>
    </citation>
    <scope>NUCLEOTIDE SEQUENCE [LARGE SCALE GENOMIC DNA]</scope>
    <source>
        <strain>G9842</strain>
    </source>
</reference>
<gene>
    <name type="ordered locus">BCG9842_B2589</name>
</gene>
<accession>B7IIM0</accession>
<protein>
    <recommendedName>
        <fullName evidence="1">Putative metal-dependent hydrolase BCG9842_B2589</fullName>
        <ecNumber evidence="1">3.-.-.-</ecNumber>
    </recommendedName>
</protein>
<comment type="function">
    <text evidence="1">Possible metal-dependent hydrolase.</text>
</comment>
<comment type="cofactor">
    <cofactor evidence="1">
        <name>Zn(2+)</name>
        <dbReference type="ChEBI" id="CHEBI:29105"/>
    </cofactor>
    <text evidence="1">Binds 1 zinc ion per subunit.</text>
</comment>
<comment type="subunit">
    <text evidence="1">Homodimer.</text>
</comment>
<comment type="subcellular location">
    <subcellularLocation>
        <location evidence="1">Cytoplasm</location>
    </subcellularLocation>
</comment>
<comment type="similarity">
    <text evidence="1">Belongs to the metal hydrolase YfiT family.</text>
</comment>